<evidence type="ECO:0000250" key="1"/>
<evidence type="ECO:0000255" key="2">
    <source>
        <dbReference type="PROSITE-ProRule" id="PRU00274"/>
    </source>
</evidence>
<evidence type="ECO:0000269" key="3">
    <source>
    </source>
</evidence>
<evidence type="ECO:0000269" key="4">
    <source>
    </source>
</evidence>
<evidence type="ECO:0000269" key="5">
    <source>
    </source>
</evidence>
<evidence type="ECO:0000269" key="6">
    <source>
    </source>
</evidence>
<evidence type="ECO:0000269" key="7">
    <source>
    </source>
</evidence>
<evidence type="ECO:0000269" key="8">
    <source>
    </source>
</evidence>
<evidence type="ECO:0000269" key="9">
    <source>
    </source>
</evidence>
<evidence type="ECO:0000269" key="10">
    <source>
    </source>
</evidence>
<evidence type="ECO:0000269" key="11">
    <source>
    </source>
</evidence>
<evidence type="ECO:0000269" key="12">
    <source>
    </source>
</evidence>
<evidence type="ECO:0000269" key="13">
    <source>
    </source>
</evidence>
<evidence type="ECO:0000269" key="14">
    <source>
    </source>
</evidence>
<evidence type="ECO:0000269" key="15">
    <source>
    </source>
</evidence>
<evidence type="ECO:0000269" key="16">
    <source>
    </source>
</evidence>
<evidence type="ECO:0000305" key="17"/>
<protein>
    <recommendedName>
        <fullName>Kallikrein-14</fullName>
        <shortName>hK14</shortName>
        <ecNumber>3.4.21.-</ecNumber>
    </recommendedName>
    <alternativeName>
        <fullName>Kallikrein-like protein 6</fullName>
        <shortName>KLK-L6</shortName>
    </alternativeName>
</protein>
<dbReference type="EC" id="3.4.21.-"/>
<dbReference type="EMBL" id="AF161221">
    <property type="protein sequence ID" value="AAD50773.2"/>
    <property type="status" value="ALT_SEQ"/>
    <property type="molecule type" value="Genomic_DNA"/>
</dbReference>
<dbReference type="EMBL" id="AF283669">
    <property type="protein sequence ID" value="AAK48523.1"/>
    <property type="status" value="ALT_SEQ"/>
    <property type="molecule type" value="Genomic_DNA"/>
</dbReference>
<dbReference type="EMBL" id="AF283670">
    <property type="protein sequence ID" value="AAK48524.1"/>
    <property type="status" value="ALT_INIT"/>
    <property type="molecule type" value="mRNA"/>
</dbReference>
<dbReference type="EMBL" id="EU091477">
    <property type="protein sequence ID" value="ABU63131.1"/>
    <property type="status" value="ALT_SEQ"/>
    <property type="molecule type" value="Genomic_DNA"/>
</dbReference>
<dbReference type="EMBL" id="AC011473">
    <property type="protein sequence ID" value="AAG23260.1"/>
    <property type="status" value="ALT_SEQ"/>
    <property type="molecule type" value="Genomic_DNA"/>
</dbReference>
<dbReference type="EMBL" id="CH471135">
    <property type="protein sequence ID" value="EAW71982.1"/>
    <property type="molecule type" value="Genomic_DNA"/>
</dbReference>
<dbReference type="EMBL" id="BC074904">
    <property type="protein sequence ID" value="AAH74904.2"/>
    <property type="molecule type" value="mRNA"/>
</dbReference>
<dbReference type="EMBL" id="BC074905">
    <property type="protein sequence ID" value="AAH74905.2"/>
    <property type="molecule type" value="mRNA"/>
</dbReference>
<dbReference type="EMBL" id="BC114614">
    <property type="protein sequence ID" value="AAI14615.2"/>
    <property type="molecule type" value="mRNA"/>
</dbReference>
<dbReference type="RefSeq" id="NP_001298111.1">
    <property type="nucleotide sequence ID" value="NM_001311182.1"/>
</dbReference>
<dbReference type="RefSeq" id="NP_071329.2">
    <property type="nucleotide sequence ID" value="NM_022046.5"/>
</dbReference>
<dbReference type="SMR" id="Q9P0G3"/>
<dbReference type="BioGRID" id="119063">
    <property type="interactions" value="15"/>
</dbReference>
<dbReference type="FunCoup" id="Q9P0G3">
    <property type="interactions" value="93"/>
</dbReference>
<dbReference type="IntAct" id="Q9P0G3">
    <property type="interactions" value="5"/>
</dbReference>
<dbReference type="MINT" id="Q9P0G3"/>
<dbReference type="STRING" id="9606.ENSP00000375678"/>
<dbReference type="BindingDB" id="Q9P0G3"/>
<dbReference type="ChEMBL" id="CHEMBL2641"/>
<dbReference type="GuidetoPHARMACOLOGY" id="2866"/>
<dbReference type="MEROPS" id="S01.029"/>
<dbReference type="GlyGen" id="Q9P0G3">
    <property type="glycosylation" value="1 site"/>
</dbReference>
<dbReference type="iPTMnet" id="Q9P0G3"/>
<dbReference type="PhosphoSitePlus" id="Q9P0G3"/>
<dbReference type="BioMuta" id="KLK14"/>
<dbReference type="DMDM" id="251757292"/>
<dbReference type="jPOST" id="Q9P0G3"/>
<dbReference type="MassIVE" id="Q9P0G3"/>
<dbReference type="PaxDb" id="9606-ENSP00000375678"/>
<dbReference type="PeptideAtlas" id="Q9P0G3"/>
<dbReference type="PRIDE" id="Q9P0G3"/>
<dbReference type="ProteomicsDB" id="83548"/>
<dbReference type="Antibodypedia" id="18986">
    <property type="antibodies" value="207 antibodies from 27 providers"/>
</dbReference>
<dbReference type="DNASU" id="43847"/>
<dbReference type="Ensembl" id="ENST00000391802.1">
    <property type="protein sequence ID" value="ENSP00000375678.1"/>
    <property type="gene ID" value="ENSG00000129437.11"/>
</dbReference>
<dbReference type="GeneID" id="43847"/>
<dbReference type="KEGG" id="hsa:43847"/>
<dbReference type="UCSC" id="uc002pvs.1">
    <property type="organism name" value="human"/>
</dbReference>
<dbReference type="AGR" id="HGNC:6362"/>
<dbReference type="CTD" id="43847"/>
<dbReference type="DisGeNET" id="43847"/>
<dbReference type="GeneCards" id="KLK14"/>
<dbReference type="HGNC" id="HGNC:6362">
    <property type="gene designation" value="KLK14"/>
</dbReference>
<dbReference type="HPA" id="ENSG00000129437">
    <property type="expression patterns" value="Tissue enhanced (skin)"/>
</dbReference>
<dbReference type="MIM" id="606135">
    <property type="type" value="gene"/>
</dbReference>
<dbReference type="neXtProt" id="NX_Q9P0G3"/>
<dbReference type="OpenTargets" id="ENSG00000129437"/>
<dbReference type="PharmGKB" id="PA30151"/>
<dbReference type="VEuPathDB" id="HostDB:ENSG00000129437"/>
<dbReference type="eggNOG" id="KOG3627">
    <property type="taxonomic scope" value="Eukaryota"/>
</dbReference>
<dbReference type="GeneTree" id="ENSGT01020000230389"/>
<dbReference type="HOGENOM" id="CLU_006842_1_1_1"/>
<dbReference type="InParanoid" id="Q9P0G3"/>
<dbReference type="OrthoDB" id="10012881at2759"/>
<dbReference type="PAN-GO" id="Q9P0G3">
    <property type="GO annotations" value="3 GO annotations based on evolutionary models"/>
</dbReference>
<dbReference type="PhylomeDB" id="Q9P0G3"/>
<dbReference type="TreeFam" id="TF331065"/>
<dbReference type="BRENDA" id="3.4.21.B45">
    <property type="organism ID" value="2681"/>
</dbReference>
<dbReference type="PathwayCommons" id="Q9P0G3"/>
<dbReference type="Reactome" id="R-HSA-6809371">
    <property type="pathway name" value="Formation of the cornified envelope"/>
</dbReference>
<dbReference type="SignaLink" id="Q9P0G3"/>
<dbReference type="BioGRID-ORCS" id="43847">
    <property type="hits" value="11 hits in 1146 CRISPR screens"/>
</dbReference>
<dbReference type="GeneWiki" id="KLK14"/>
<dbReference type="GenomeRNAi" id="43847"/>
<dbReference type="Pharos" id="Q9P0G3">
    <property type="development level" value="Tchem"/>
</dbReference>
<dbReference type="PRO" id="PR:Q9P0G3"/>
<dbReference type="Proteomes" id="UP000005640">
    <property type="component" value="Chromosome 19"/>
</dbReference>
<dbReference type="RNAct" id="Q9P0G3">
    <property type="molecule type" value="protein"/>
</dbReference>
<dbReference type="Bgee" id="ENSG00000129437">
    <property type="expression patterns" value="Expressed in skin of leg and 96 other cell types or tissues"/>
</dbReference>
<dbReference type="ExpressionAtlas" id="Q9P0G3">
    <property type="expression patterns" value="baseline and differential"/>
</dbReference>
<dbReference type="GO" id="GO:0005576">
    <property type="term" value="C:extracellular region"/>
    <property type="evidence" value="ECO:0000304"/>
    <property type="project" value="Reactome"/>
</dbReference>
<dbReference type="GO" id="GO:0005615">
    <property type="term" value="C:extracellular space"/>
    <property type="evidence" value="ECO:0000314"/>
    <property type="project" value="UniProtKB"/>
</dbReference>
<dbReference type="GO" id="GO:0030141">
    <property type="term" value="C:secretory granule"/>
    <property type="evidence" value="ECO:0000318"/>
    <property type="project" value="GO_Central"/>
</dbReference>
<dbReference type="GO" id="GO:0004252">
    <property type="term" value="F:serine-type endopeptidase activity"/>
    <property type="evidence" value="ECO:0000314"/>
    <property type="project" value="UniProtKB"/>
</dbReference>
<dbReference type="GO" id="GO:0048730">
    <property type="term" value="P:epidermis morphogenesis"/>
    <property type="evidence" value="ECO:0000314"/>
    <property type="project" value="UniProtKB"/>
</dbReference>
<dbReference type="GO" id="GO:0009566">
    <property type="term" value="P:fertilization"/>
    <property type="evidence" value="ECO:0000314"/>
    <property type="project" value="UniProtKB"/>
</dbReference>
<dbReference type="GO" id="GO:0045744">
    <property type="term" value="P:negative regulation of G protein-coupled receptor signaling pathway"/>
    <property type="evidence" value="ECO:0000314"/>
    <property type="project" value="UniProtKB"/>
</dbReference>
<dbReference type="GO" id="GO:0045745">
    <property type="term" value="P:positive regulation of G protein-coupled receptor signaling pathway"/>
    <property type="evidence" value="ECO:0000314"/>
    <property type="project" value="UniProtKB"/>
</dbReference>
<dbReference type="GO" id="GO:0051604">
    <property type="term" value="P:protein maturation"/>
    <property type="evidence" value="ECO:0000318"/>
    <property type="project" value="GO_Central"/>
</dbReference>
<dbReference type="GO" id="GO:0006508">
    <property type="term" value="P:proteolysis"/>
    <property type="evidence" value="ECO:0000314"/>
    <property type="project" value="UniProtKB"/>
</dbReference>
<dbReference type="GO" id="GO:0070684">
    <property type="term" value="P:seminal clot liquefaction"/>
    <property type="evidence" value="ECO:0000314"/>
    <property type="project" value="UniProtKB"/>
</dbReference>
<dbReference type="CDD" id="cd00190">
    <property type="entry name" value="Tryp_SPc"/>
    <property type="match status" value="1"/>
</dbReference>
<dbReference type="FunFam" id="2.40.10.10:FF:000021">
    <property type="entry name" value="Kallikrein 1"/>
    <property type="match status" value="1"/>
</dbReference>
<dbReference type="FunFam" id="2.40.10.10:FF:000010">
    <property type="entry name" value="Kallikrein related peptidase 11"/>
    <property type="match status" value="1"/>
</dbReference>
<dbReference type="Gene3D" id="2.40.10.10">
    <property type="entry name" value="Trypsin-like serine proteases"/>
    <property type="match status" value="2"/>
</dbReference>
<dbReference type="InterPro" id="IPR009003">
    <property type="entry name" value="Peptidase_S1_PA"/>
</dbReference>
<dbReference type="InterPro" id="IPR043504">
    <property type="entry name" value="Peptidase_S1_PA_chymotrypsin"/>
</dbReference>
<dbReference type="InterPro" id="IPR001314">
    <property type="entry name" value="Peptidase_S1A"/>
</dbReference>
<dbReference type="InterPro" id="IPR001254">
    <property type="entry name" value="Trypsin_dom"/>
</dbReference>
<dbReference type="InterPro" id="IPR018114">
    <property type="entry name" value="TRYPSIN_HIS"/>
</dbReference>
<dbReference type="InterPro" id="IPR033116">
    <property type="entry name" value="TRYPSIN_SER"/>
</dbReference>
<dbReference type="PANTHER" id="PTHR24271:SF48">
    <property type="entry name" value="KALLIKREIN-14"/>
    <property type="match status" value="1"/>
</dbReference>
<dbReference type="PANTHER" id="PTHR24271">
    <property type="entry name" value="KALLIKREIN-RELATED"/>
    <property type="match status" value="1"/>
</dbReference>
<dbReference type="Pfam" id="PF00089">
    <property type="entry name" value="Trypsin"/>
    <property type="match status" value="1"/>
</dbReference>
<dbReference type="PRINTS" id="PR00722">
    <property type="entry name" value="CHYMOTRYPSIN"/>
</dbReference>
<dbReference type="SMART" id="SM00020">
    <property type="entry name" value="Tryp_SPc"/>
    <property type="match status" value="1"/>
</dbReference>
<dbReference type="SUPFAM" id="SSF50494">
    <property type="entry name" value="Trypsin-like serine proteases"/>
    <property type="match status" value="1"/>
</dbReference>
<dbReference type="PROSITE" id="PS50240">
    <property type="entry name" value="TRYPSIN_DOM"/>
    <property type="match status" value="1"/>
</dbReference>
<dbReference type="PROSITE" id="PS00134">
    <property type="entry name" value="TRYPSIN_HIS"/>
    <property type="match status" value="1"/>
</dbReference>
<dbReference type="PROSITE" id="PS00135">
    <property type="entry name" value="TRYPSIN_SER"/>
    <property type="match status" value="1"/>
</dbReference>
<comment type="function">
    <text evidence="8 11 13 14 15 16">Serine-type endopeptidase with a dual trypsin-like and chymotrypsin-like substrate specificity. May activate/inactivate the proteinase-activated receptors F2R, F2RL1 and F2RL3 and other kallikreins including KLK1, KLK3, KLK5 and KLK11. May function in seminal clot liquefaction through direct cleavage of the semenogelin SEMG1 and SEMG2 and activation of KLK3. May function through desmoglein DSG1 cleavage in epidermal desquamation a process by which the most superficial corneocytes are shed from the skin surface. May be involved in several aspects of tumor progression including growth, invasion and angiogenesis.</text>
</comment>
<comment type="activity regulation">
    <text evidence="8 12 13">Inhibited by SERPINA1, SERPINC1, SERPINE1, SERPINF2, aprotinin, soybean, trypsin inhibitor and leupeptin. Inhibited by serine protease inhibitor SPINK5. Has an autoproteolytic activity which may have a regulatory effect. Activated by citrate and inhibited by zinc and to a lower extent by manganese.</text>
</comment>
<comment type="biophysicochemical properties">
    <kinetics>
        <KM evidence="8 12">0.3 mM for S-2288</KM>
        <KM evidence="8 12">0.2 mM for S-2222</KM>
        <KM evidence="8 12">0.2 mM for S-2302</KM>
        <KM evidence="8 12">0.7 mM for S-2586</KM>
        <KM evidence="8 12">0.045 mM for Gln-Ala-Arg synthetic peptide</KM>
        <KM evidence="8 12">0.043 mM for Val-Pro-Arg synthetic peptide</KM>
        <KM evidence="8 12">0.09 mM for Pro-Phe-Arg synthetic peptide</KM>
        <KM evidence="8 12">0.278 mM for Phe-Ser-Arg synthetic peptide</KM>
        <KM evidence="8 12">0.0577 mM for Leu-Gly-Arg synthetic peptide</KM>
        <KM evidence="8 12">0.139 mM for Gln-Gly-Arg synthetic peptide</KM>
        <KM evidence="8 12">0.173 mM for Gly-Pro-Arg synthetic peptide</KM>
        <KM evidence="8 12">0.0268 mM for Gln-Arg-Arg synthetic peptide</KM>
        <KM evidence="8 12">0.13 mM for Gly-Gly-Arg synthetic peptide</KM>
        <KM evidence="8 12">0.578 mM for Val-Leu-Lys synthetic peptide</KM>
        <text>Has a higher catalytic efficiency for the trypsin-like enzyme substrates S-2288, S-2222 and S-2302 compared to S-2586 a chymotrypsin-like enzyme substrate. Has a lower catalytic activity compared to trypsin towards S-2288, S-2222 and S-2302. Cleaves preferentially after Arg residues.</text>
    </kinetics>
    <phDependence>
        <text evidence="8 12">Optimum pH is 8.0.</text>
    </phDependence>
</comment>
<comment type="subcellular location">
    <subcellularLocation>
        <location evidence="8 9 12">Secreted</location>
        <location evidence="8 9 12">Extracellular space</location>
    </subcellularLocation>
</comment>
<comment type="tissue specificity">
    <text evidence="3 4 5 9 10 12">Highly expressed in CNS, bone marrow and fetal liver. Also expressed in breast, thyroid, kidney, colon, pancreas, spleen, prostate, uterus, small intestine, placenta and skeletal muscle. Among 40 tissues tested, the highest expression is detected in skin followed by breast and prostate (at protein level). Expressed in stratum corneum by sweat ducts and sweat glands and detected in sweat (at protein level).</text>
</comment>
<comment type="induction">
    <text evidence="6">Up-regulated by steroid hormone.</text>
</comment>
<comment type="PTM">
    <text evidence="12">Proteolytic cleavage of the activation peptide produces the active enzyme.</text>
</comment>
<comment type="similarity">
    <text evidence="2">Belongs to the peptidase S1 family. Kallikrein subfamily.</text>
</comment>
<comment type="caution">
    <text evidence="17">It is uncertain whether Met-1 or Met-17 is the initiator.</text>
</comment>
<comment type="sequence caution" evidence="17">
    <conflict type="erroneous gene model prediction">
        <sequence resource="EMBL-CDS" id="AAD50773"/>
    </conflict>
</comment>
<comment type="sequence caution" evidence="17">
    <conflict type="erroneous gene model prediction">
        <sequence resource="EMBL-CDS" id="AAG23260"/>
    </conflict>
</comment>
<comment type="sequence caution" evidence="17">
    <conflict type="erroneous gene model prediction">
        <sequence resource="EMBL-CDS" id="AAK48523"/>
    </conflict>
</comment>
<comment type="sequence caution" evidence="17">
    <conflict type="erroneous initiation">
        <sequence resource="EMBL-CDS" id="AAK48524"/>
    </conflict>
</comment>
<comment type="sequence caution" evidence="17">
    <conflict type="erroneous gene model prediction">
        <sequence resource="EMBL-CDS" id="ABU63131"/>
    </conflict>
</comment>
<sequence length="267" mass="29122">MSLRVLGSGTWPSAPKMFLLLTALQVLAIAMTQSQEDENKIIGGHTCTRSSQPWQAALLAGPRRRFLCGGALLSGQWVITAAHCGRPILQVALGKHNLRRWEATQQVLRVVRQVTHPNYNSRTHDNDLMLLQLQQPARIGRAVRPIEVTQACASPGTSCRVSGWGTISSPIARYPASLQCVNINISPDEVCQKAYPRTITPGMVCAGVPQGGKDSCQGDSGGPLVCRGQLQGLVSWGMERCALPGYPGVYTNLCKYRSWIEETMRDK</sequence>
<keyword id="KW-0068">Autocatalytic cleavage</keyword>
<keyword id="KW-0903">Direct protein sequencing</keyword>
<keyword id="KW-1015">Disulfide bond</keyword>
<keyword id="KW-0378">Hydrolase</keyword>
<keyword id="KW-0645">Protease</keyword>
<keyword id="KW-1267">Proteomics identification</keyword>
<keyword id="KW-1185">Reference proteome</keyword>
<keyword id="KW-0964">Secreted</keyword>
<keyword id="KW-0720">Serine protease</keyword>
<keyword id="KW-0732">Signal</keyword>
<keyword id="KW-0865">Zymogen</keyword>
<organism>
    <name type="scientific">Homo sapiens</name>
    <name type="common">Human</name>
    <dbReference type="NCBI Taxonomy" id="9606"/>
    <lineage>
        <taxon>Eukaryota</taxon>
        <taxon>Metazoa</taxon>
        <taxon>Chordata</taxon>
        <taxon>Craniata</taxon>
        <taxon>Vertebrata</taxon>
        <taxon>Euteleostomi</taxon>
        <taxon>Mammalia</taxon>
        <taxon>Eutheria</taxon>
        <taxon>Euarchontoglires</taxon>
        <taxon>Primates</taxon>
        <taxon>Haplorrhini</taxon>
        <taxon>Catarrhini</taxon>
        <taxon>Hominidae</taxon>
        <taxon>Homo</taxon>
    </lineage>
</organism>
<accession>Q9P0G3</accession>
<accession>A7UNK5</accession>
<accession>Q1RMZ2</accession>
<accession>Q6B089</accession>
<reference key="1">
    <citation type="journal article" date="2001" name="Cancer Res.">
        <title>Cloning of a new member of the human kallikrein gene family, KLK14, which is down-regulated in different malignancies.</title>
        <authorList>
            <person name="Yousef G.M."/>
            <person name="Magklara A."/>
            <person name="Chang A."/>
            <person name="Jung K."/>
            <person name="Katsaros D."/>
            <person name="Diamandis E.P."/>
        </authorList>
    </citation>
    <scope>NUCLEOTIDE SEQUENCE [GENOMIC DNA]</scope>
    <scope>TISSUE SPECIFICITY</scope>
</reference>
<reference key="2">
    <citation type="journal article" date="2001" name="Genomics">
        <title>Identification and characterization of KLK14, a novel kallikrein serine protease gene located on human chromosome 19q13.4 and expressed in prostate and skeletal muscle.</title>
        <authorList>
            <person name="Hooper J.D."/>
            <person name="Bui L.T."/>
            <person name="Rae F.K."/>
            <person name="Harvey T.J."/>
            <person name="Myers S.A."/>
            <person name="Ashworth L.K."/>
            <person name="Clements J.A."/>
        </authorList>
    </citation>
    <scope>NUCLEOTIDE SEQUENCE [GENOMIC DNA / MRNA]</scope>
    <scope>TISSUE SPECIFICITY</scope>
</reference>
<reference key="3">
    <citation type="journal article" date="2007" name="Genet. Epidemiol.">
        <title>Understanding the accuracy of statistical haplotype inference with sequence data of known phase.</title>
        <authorList>
            <person name="Andres A.M."/>
            <person name="Clark A.G."/>
            <person name="Shimmin L."/>
            <person name="Boerwinkle E."/>
            <person name="Sing C.F."/>
            <person name="Hixson J.E."/>
        </authorList>
    </citation>
    <scope>NUCLEOTIDE SEQUENCE [GENOMIC DNA]</scope>
</reference>
<reference key="4">
    <citation type="journal article" date="2004" name="Nature">
        <title>The DNA sequence and biology of human chromosome 19.</title>
        <authorList>
            <person name="Grimwood J."/>
            <person name="Gordon L.A."/>
            <person name="Olsen A.S."/>
            <person name="Terry A."/>
            <person name="Schmutz J."/>
            <person name="Lamerdin J.E."/>
            <person name="Hellsten U."/>
            <person name="Goodstein D."/>
            <person name="Couronne O."/>
            <person name="Tran-Gyamfi M."/>
            <person name="Aerts A."/>
            <person name="Altherr M."/>
            <person name="Ashworth L."/>
            <person name="Bajorek E."/>
            <person name="Black S."/>
            <person name="Branscomb E."/>
            <person name="Caenepeel S."/>
            <person name="Carrano A.V."/>
            <person name="Caoile C."/>
            <person name="Chan Y.M."/>
            <person name="Christensen M."/>
            <person name="Cleland C.A."/>
            <person name="Copeland A."/>
            <person name="Dalin E."/>
            <person name="Dehal P."/>
            <person name="Denys M."/>
            <person name="Detter J.C."/>
            <person name="Escobar J."/>
            <person name="Flowers D."/>
            <person name="Fotopulos D."/>
            <person name="Garcia C."/>
            <person name="Georgescu A.M."/>
            <person name="Glavina T."/>
            <person name="Gomez M."/>
            <person name="Gonzales E."/>
            <person name="Groza M."/>
            <person name="Hammon N."/>
            <person name="Hawkins T."/>
            <person name="Haydu L."/>
            <person name="Ho I."/>
            <person name="Huang W."/>
            <person name="Israni S."/>
            <person name="Jett J."/>
            <person name="Kadner K."/>
            <person name="Kimball H."/>
            <person name="Kobayashi A."/>
            <person name="Larionov V."/>
            <person name="Leem S.-H."/>
            <person name="Lopez F."/>
            <person name="Lou Y."/>
            <person name="Lowry S."/>
            <person name="Malfatti S."/>
            <person name="Martinez D."/>
            <person name="McCready P.M."/>
            <person name="Medina C."/>
            <person name="Morgan J."/>
            <person name="Nelson K."/>
            <person name="Nolan M."/>
            <person name="Ovcharenko I."/>
            <person name="Pitluck S."/>
            <person name="Pollard M."/>
            <person name="Popkie A.P."/>
            <person name="Predki P."/>
            <person name="Quan G."/>
            <person name="Ramirez L."/>
            <person name="Rash S."/>
            <person name="Retterer J."/>
            <person name="Rodriguez A."/>
            <person name="Rogers S."/>
            <person name="Salamov A."/>
            <person name="Salazar A."/>
            <person name="She X."/>
            <person name="Smith D."/>
            <person name="Slezak T."/>
            <person name="Solovyev V."/>
            <person name="Thayer N."/>
            <person name="Tice H."/>
            <person name="Tsai M."/>
            <person name="Ustaszewska A."/>
            <person name="Vo N."/>
            <person name="Wagner M."/>
            <person name="Wheeler J."/>
            <person name="Wu K."/>
            <person name="Xie G."/>
            <person name="Yang J."/>
            <person name="Dubchak I."/>
            <person name="Furey T.S."/>
            <person name="DeJong P."/>
            <person name="Dickson M."/>
            <person name="Gordon D."/>
            <person name="Eichler E.E."/>
            <person name="Pennacchio L.A."/>
            <person name="Richardson P."/>
            <person name="Stubbs L."/>
            <person name="Rokhsar D.S."/>
            <person name="Myers R.M."/>
            <person name="Rubin E.M."/>
            <person name="Lucas S.M."/>
        </authorList>
    </citation>
    <scope>NUCLEOTIDE SEQUENCE [LARGE SCALE GENOMIC DNA]</scope>
</reference>
<reference key="5">
    <citation type="submission" date="2005-07" db="EMBL/GenBank/DDBJ databases">
        <authorList>
            <person name="Mural R.J."/>
            <person name="Istrail S."/>
            <person name="Sutton G.G."/>
            <person name="Florea L."/>
            <person name="Halpern A.L."/>
            <person name="Mobarry C.M."/>
            <person name="Lippert R."/>
            <person name="Walenz B."/>
            <person name="Shatkay H."/>
            <person name="Dew I."/>
            <person name="Miller J.R."/>
            <person name="Flanigan M.J."/>
            <person name="Edwards N.J."/>
            <person name="Bolanos R."/>
            <person name="Fasulo D."/>
            <person name="Halldorsson B.V."/>
            <person name="Hannenhalli S."/>
            <person name="Turner R."/>
            <person name="Yooseph S."/>
            <person name="Lu F."/>
            <person name="Nusskern D.R."/>
            <person name="Shue B.C."/>
            <person name="Zheng X.H."/>
            <person name="Zhong F."/>
            <person name="Delcher A.L."/>
            <person name="Huson D.H."/>
            <person name="Kravitz S.A."/>
            <person name="Mouchard L."/>
            <person name="Reinert K."/>
            <person name="Remington K.A."/>
            <person name="Clark A.G."/>
            <person name="Waterman M.S."/>
            <person name="Eichler E.E."/>
            <person name="Adams M.D."/>
            <person name="Hunkapiller M.W."/>
            <person name="Myers E.W."/>
            <person name="Venter J.C."/>
        </authorList>
    </citation>
    <scope>NUCLEOTIDE SEQUENCE [LARGE SCALE GENOMIC DNA]</scope>
</reference>
<reference key="6">
    <citation type="journal article" date="2004" name="Genome Res.">
        <title>The status, quality, and expansion of the NIH full-length cDNA project: the Mammalian Gene Collection (MGC).</title>
        <authorList>
            <consortium name="The MGC Project Team"/>
        </authorList>
    </citation>
    <scope>NUCLEOTIDE SEQUENCE [LARGE SCALE MRNA]</scope>
    <scope>VARIANTS ARG-33 AND TYR-45</scope>
    <source>
        <tissue>Lung</tissue>
    </source>
</reference>
<reference key="7">
    <citation type="journal article" date="2000" name="J. Biol. Chem.">
        <title>Tissue-specific expression patterns and fine mapping of the human kallikrein (KLK) locus on proximal 19q13.4.</title>
        <authorList>
            <person name="Harvey T.J."/>
            <person name="Hooper J.D."/>
            <person name="Myers S.A."/>
            <person name="Stephenson S.A."/>
            <person name="Ashworth L.K."/>
            <person name="Clements J.A."/>
        </authorList>
    </citation>
    <scope>TISSUE SPECIFICITY</scope>
</reference>
<reference key="8">
    <citation type="journal article" date="2003" name="Am. J. Clin. Pathol.">
        <title>Steroid hormone regulation and prognostic value of the human kallikrein gene 14 in ovarian cancer.</title>
        <authorList>
            <person name="Yousef G.M."/>
            <person name="Fracchioli S."/>
            <person name="Scorilas A."/>
            <person name="Borgono C.A."/>
            <person name="Iskander L."/>
            <person name="Puopolo M."/>
            <person name="Massobrio M."/>
            <person name="Diamandis E.P."/>
            <person name="Katsaros D."/>
        </authorList>
    </citation>
    <scope>INDUCTION BY STEROID HORMONE</scope>
</reference>
<reference key="9">
    <citation type="journal article" date="2005" name="Biol. Chem.">
        <title>Enzymatic profiling of human kallikrein 14 using phage-display substrate technology.</title>
        <authorList>
            <person name="Felber L.M."/>
            <person name="Borgono C.A."/>
            <person name="Cloutier S.M."/>
            <person name="Kuendig C."/>
            <person name="Kishi T."/>
            <person name="Ribeiro Chagas J."/>
            <person name="Jichlinski P."/>
            <person name="Gygi C.M."/>
            <person name="Leisinger H.-J."/>
            <person name="Diamandis E.P."/>
            <person name="Deperthes D."/>
        </authorList>
    </citation>
    <scope>CHARACTERIZATION</scope>
</reference>
<reference key="10">
    <citation type="journal article" date="2005" name="J. Invest. Dermatol.">
        <title>A proteolytic cascade of kallikreins in the stratum corneum.</title>
        <authorList>
            <person name="Brattsand M."/>
            <person name="Stefansson K."/>
            <person name="Lundh C."/>
            <person name="Haasum Y."/>
            <person name="Egelrud T."/>
        </authorList>
    </citation>
    <scope>FUNCTION</scope>
    <scope>SUBCELLULAR LOCATION</scope>
    <scope>CATALYTIC ACTIVITY</scope>
    <scope>BIOPHYSICOCHEMICAL PROPERTIES</scope>
    <scope>ACTIVITY REGULATION</scope>
</reference>
<reference key="11">
    <citation type="journal article" date="2006" name="Biol. Chem.">
        <title>Kallikrein-related peptidase 14 may be a major contributor to trypsin-like proteolytic activity in human stratum corneum.</title>
        <authorList>
            <person name="Stefansson K."/>
            <person name="Brattsand M."/>
            <person name="Ny A."/>
            <person name="Glas B."/>
            <person name="Egelrud T."/>
        </authorList>
    </citation>
    <scope>PROTEIN SEQUENCE OF 41-55</scope>
    <scope>TISSUE SPECIFICITY</scope>
</reference>
<reference key="12">
    <citation type="journal article" date="2006" name="J. Biol. Chem.">
        <title>Proteinase-activated receptors, targets for kallikrein signaling.</title>
        <authorList>
            <person name="Oikonomopoulou K."/>
            <person name="Hansen K.K."/>
            <person name="Saifeddine M."/>
            <person name="Tea I."/>
            <person name="Blaber M."/>
            <person name="Blaber S.I."/>
            <person name="Scarisbrick I."/>
            <person name="Andrade-Gordon P."/>
            <person name="Cottrell G.S."/>
            <person name="Bunnett N.W."/>
            <person name="Diamandis E.P."/>
            <person name="Hollenberg M.D."/>
        </authorList>
    </citation>
    <scope>FUNCTION IN G PROTEIN-COUPLED RECEPTOR SIGNALING</scope>
</reference>
<reference key="13">
    <citation type="journal article" date="2006" name="J. Invest. Dermatol.">
        <title>Quantification of eight tissue kallikreins in the stratum corneum and sweat.</title>
        <authorList>
            <person name="Komatsu N."/>
            <person name="Tsai B."/>
            <person name="Sidiropoulos M."/>
            <person name="Saijoh K."/>
            <person name="Levesque M.A."/>
            <person name="Takehara K."/>
            <person name="Diamandis E.P."/>
        </authorList>
    </citation>
    <scope>TISSUE SPECIFICITY</scope>
    <scope>SUBCELLULAR LOCATION</scope>
</reference>
<reference key="14">
    <citation type="journal article" date="2007" name="J. Biol. Chem.">
        <title>Expression and functional characterization of the cancer-related serine protease, human tissue kallikrein 14.</title>
        <authorList>
            <person name="Borgono C.A."/>
            <person name="Michael I.P."/>
            <person name="Shaw J.L.V."/>
            <person name="Luo L.-Y."/>
            <person name="Ghosh M.C."/>
            <person name="Soosaipillai A."/>
            <person name="Grass L."/>
            <person name="Katsaros D."/>
            <person name="Diamandis E.P."/>
        </authorList>
    </citation>
    <scope>SUBCELLULAR LOCATION</scope>
    <scope>TISSUE SPECIFICITY</scope>
    <scope>PROTEOLYTIC PROCESSING</scope>
    <scope>BIOPHYSICOCHEMICAL PROPERTIES</scope>
    <scope>ACTIVITY REGULATION</scope>
</reference>
<reference key="15">
    <citation type="journal article" date="2007" name="J. Biol. Chem.">
        <title>A potential role for multiple tissue kallikrein serine proteases in epidermal desquamation.</title>
        <authorList>
            <person name="Borgono C.A."/>
            <person name="Michael I.P."/>
            <person name="Komatsu N."/>
            <person name="Jayakumar A."/>
            <person name="Kapadia R."/>
            <person name="Clayman G.L."/>
            <person name="Sotiropoulou G."/>
            <person name="Diamandis E.P."/>
        </authorList>
    </citation>
    <scope>FUNCTION</scope>
    <scope>ACTIVITY REGULATION</scope>
</reference>
<reference key="16">
    <citation type="journal article" date="2008" name="J. Biol. Chem.">
        <title>Human kallikrein-related peptidase 14 (KLK14) is a new activator component of the KLK proteolytic cascade. Possible function in seminal plasma and skin.</title>
        <authorList>
            <person name="Emami N."/>
            <person name="Diamandis E.P."/>
        </authorList>
    </citation>
    <scope>FUNCTION</scope>
</reference>
<reference key="17">
    <citation type="journal article" date="2008" name="J. Biol. Chem.">
        <title>Major role of human KLK14 in seminal clot liquefaction.</title>
        <authorList>
            <person name="Emami N."/>
            <person name="Deperthes D."/>
            <person name="Malm J."/>
            <person name="Diamandis E.P."/>
        </authorList>
    </citation>
    <scope>FUNCTION</scope>
</reference>
<reference key="18">
    <citation type="journal article" date="2008" name="J. Invest. Dermatol.">
        <title>Activation of proteinase-activated receptor-2 by human kallikrein-related peptidases.</title>
        <authorList>
            <person name="Stefansson K."/>
            <person name="Brattsand M."/>
            <person name="Roosterman D."/>
            <person name="Kempkes C."/>
            <person name="Bocheva G."/>
            <person name="Steinhoff M."/>
            <person name="Egelrud T."/>
        </authorList>
    </citation>
    <scope>FUNCTION</scope>
</reference>
<feature type="signal peptide">
    <location>
        <begin position="1"/>
        <end position="34"/>
    </location>
</feature>
<feature type="propeptide" id="PRO_0000027958" description="Activation peptide" evidence="10">
    <location>
        <begin position="35"/>
        <end position="40"/>
    </location>
</feature>
<feature type="chain" id="PRO_0000027959" description="Kallikrein-14">
    <location>
        <begin position="41"/>
        <end position="267"/>
    </location>
</feature>
<feature type="domain" description="Peptidase S1" evidence="2">
    <location>
        <begin position="41"/>
        <end position="265"/>
    </location>
</feature>
<feature type="active site" description="Charge relay system" evidence="1">
    <location>
        <position position="83"/>
    </location>
</feature>
<feature type="active site" description="Charge relay system" evidence="1">
    <location>
        <position position="127"/>
    </location>
</feature>
<feature type="active site" description="Charge relay system" evidence="1">
    <location>
        <position position="220"/>
    </location>
</feature>
<feature type="disulfide bond" evidence="2">
    <location>
        <begin position="47"/>
        <end position="180"/>
    </location>
</feature>
<feature type="disulfide bond" evidence="2">
    <location>
        <begin position="68"/>
        <end position="84"/>
    </location>
</feature>
<feature type="disulfide bond" evidence="2">
    <location>
        <begin position="159"/>
        <end position="226"/>
    </location>
</feature>
<feature type="disulfide bond" evidence="2">
    <location>
        <begin position="191"/>
        <end position="205"/>
    </location>
</feature>
<feature type="disulfide bond" evidence="2">
    <location>
        <begin position="216"/>
        <end position="241"/>
    </location>
</feature>
<feature type="sequence variant" id="VAR_058018" description="In dbSNP:rs35287116." evidence="7">
    <original>Q</original>
    <variation>R</variation>
    <location>
        <position position="33"/>
    </location>
</feature>
<feature type="sequence variant" id="VAR_058019" description="In dbSNP:rs2569491." evidence="7">
    <original>H</original>
    <variation>Y</variation>
    <location>
        <position position="45"/>
    </location>
</feature>
<feature type="sequence variant" id="VAR_058020" description="In dbSNP:rs2569490.">
    <original>R</original>
    <variation>H</variation>
    <location>
        <position position="64"/>
    </location>
</feature>
<name>KLK14_HUMAN</name>
<proteinExistence type="evidence at protein level"/>
<gene>
    <name type="primary">KLK14</name>
    <name type="synonym">KLKL6</name>
</gene>